<accession>C1L1G9</accession>
<gene>
    <name type="ordered locus">Lm4b_00917</name>
</gene>
<comment type="cofactor">
    <cofactor evidence="1">
        <name>Zn(2+)</name>
        <dbReference type="ChEBI" id="CHEBI:29105"/>
    </cofactor>
    <text evidence="1">Binds 1 zinc ion.</text>
</comment>
<comment type="subcellular location">
    <subcellularLocation>
        <location evidence="1">Cytoplasm</location>
    </subcellularLocation>
</comment>
<comment type="similarity">
    <text evidence="1">Belongs to the SprT family.</text>
</comment>
<evidence type="ECO:0000255" key="1">
    <source>
        <dbReference type="HAMAP-Rule" id="MF_00745"/>
    </source>
</evidence>
<sequence>MNQAELQRHMEEVSLQFFQKEFRHQAVFNARLRTTGGRYLLKSHNIEMNPKYLENFGLAYFIGIMKHELCHYHLHLEKKGYQHRDQDFRELLKKVDAPRFCATIPREITMHEYTCKSCGKSFLRQRRFNVNRYRCGSCGGKLIQTGSKKIYTENA</sequence>
<keyword id="KW-0963">Cytoplasm</keyword>
<keyword id="KW-0479">Metal-binding</keyword>
<keyword id="KW-0862">Zinc</keyword>
<organism>
    <name type="scientific">Listeria monocytogenes serotype 4b (strain CLIP80459)</name>
    <dbReference type="NCBI Taxonomy" id="568819"/>
    <lineage>
        <taxon>Bacteria</taxon>
        <taxon>Bacillati</taxon>
        <taxon>Bacillota</taxon>
        <taxon>Bacilli</taxon>
        <taxon>Bacillales</taxon>
        <taxon>Listeriaceae</taxon>
        <taxon>Listeria</taxon>
    </lineage>
</organism>
<protein>
    <recommendedName>
        <fullName evidence="1">Protein SprT-like</fullName>
    </recommendedName>
</protein>
<dbReference type="EMBL" id="FM242711">
    <property type="protein sequence ID" value="CAS04684.1"/>
    <property type="molecule type" value="Genomic_DNA"/>
</dbReference>
<dbReference type="RefSeq" id="WP_003727107.1">
    <property type="nucleotide sequence ID" value="NC_012488.1"/>
</dbReference>
<dbReference type="KEGG" id="lmc:Lm4b_00917"/>
<dbReference type="HOGENOM" id="CLU_123820_0_0_9"/>
<dbReference type="GO" id="GO:0005737">
    <property type="term" value="C:cytoplasm"/>
    <property type="evidence" value="ECO:0007669"/>
    <property type="project" value="UniProtKB-SubCell"/>
</dbReference>
<dbReference type="GO" id="GO:0008270">
    <property type="term" value="F:zinc ion binding"/>
    <property type="evidence" value="ECO:0007669"/>
    <property type="project" value="UniProtKB-UniRule"/>
</dbReference>
<dbReference type="GO" id="GO:0006950">
    <property type="term" value="P:response to stress"/>
    <property type="evidence" value="ECO:0007669"/>
    <property type="project" value="UniProtKB-ARBA"/>
</dbReference>
<dbReference type="HAMAP" id="MF_00745">
    <property type="entry name" value="SprT_like"/>
    <property type="match status" value="1"/>
</dbReference>
<dbReference type="InterPro" id="IPR006640">
    <property type="entry name" value="SprT-like_domain"/>
</dbReference>
<dbReference type="InterPro" id="IPR035240">
    <property type="entry name" value="SprT_Zn_ribbon"/>
</dbReference>
<dbReference type="InterPro" id="IPR023524">
    <property type="entry name" value="Uncharacterised_SprT-like"/>
</dbReference>
<dbReference type="NCBIfam" id="NF003339">
    <property type="entry name" value="PRK04351.1"/>
    <property type="match status" value="1"/>
</dbReference>
<dbReference type="Pfam" id="PF10263">
    <property type="entry name" value="SprT-like"/>
    <property type="match status" value="1"/>
</dbReference>
<dbReference type="Pfam" id="PF17283">
    <property type="entry name" value="Zn_ribbon_SprT"/>
    <property type="match status" value="1"/>
</dbReference>
<dbReference type="SMART" id="SM00731">
    <property type="entry name" value="SprT"/>
    <property type="match status" value="1"/>
</dbReference>
<proteinExistence type="inferred from homology"/>
<reference key="1">
    <citation type="journal article" date="2012" name="BMC Genomics">
        <title>Comparative genomics and transcriptomics of lineages I, II, and III strains of Listeria monocytogenes.</title>
        <authorList>
            <person name="Hain T."/>
            <person name="Ghai R."/>
            <person name="Billion A."/>
            <person name="Kuenne C.T."/>
            <person name="Steinweg C."/>
            <person name="Izar B."/>
            <person name="Mohamed W."/>
            <person name="Mraheil M."/>
            <person name="Domann E."/>
            <person name="Schaffrath S."/>
            <person name="Karst U."/>
            <person name="Goesmann A."/>
            <person name="Oehm S."/>
            <person name="Puhler A."/>
            <person name="Merkl R."/>
            <person name="Vorwerk S."/>
            <person name="Glaser P."/>
            <person name="Garrido P."/>
            <person name="Rusniok C."/>
            <person name="Buchrieser C."/>
            <person name="Goebel W."/>
            <person name="Chakraborty T."/>
        </authorList>
    </citation>
    <scope>NUCLEOTIDE SEQUENCE [LARGE SCALE GENOMIC DNA]</scope>
    <source>
        <strain>CLIP80459</strain>
    </source>
</reference>
<name>SPRTL_LISMC</name>
<feature type="chain" id="PRO_1000212838" description="Protein SprT-like">
    <location>
        <begin position="1"/>
        <end position="155"/>
    </location>
</feature>
<feature type="domain" description="SprT-like" evidence="1">
    <location>
        <begin position="7"/>
        <end position="145"/>
    </location>
</feature>
<feature type="active site" evidence="1">
    <location>
        <position position="68"/>
    </location>
</feature>
<feature type="binding site" evidence="1">
    <location>
        <position position="67"/>
    </location>
    <ligand>
        <name>Zn(2+)</name>
        <dbReference type="ChEBI" id="CHEBI:29105"/>
    </ligand>
</feature>
<feature type="binding site" evidence="1">
    <location>
        <position position="71"/>
    </location>
    <ligand>
        <name>Zn(2+)</name>
        <dbReference type="ChEBI" id="CHEBI:29105"/>
    </ligand>
</feature>